<accession>A0A2R6W1B1</accession>
<accession>A0A2R6W198</accession>
<dbReference type="EMBL" id="KZ772857">
    <property type="protein sequence ID" value="PTQ27632.1"/>
    <property type="molecule type" value="Genomic_DNA"/>
</dbReference>
<dbReference type="EMBL" id="KZ772857">
    <property type="protein sequence ID" value="PTQ27633.1"/>
    <property type="status" value="ALT_SEQ"/>
    <property type="molecule type" value="Genomic_DNA"/>
</dbReference>
<dbReference type="EnsemblPlants" id="Mp5g06470.2">
    <property type="protein sequence ID" value="Mp5g06470.2.cds"/>
    <property type="gene ID" value="Mp5g06470"/>
</dbReference>
<dbReference type="Gramene" id="Mp5g06470.2">
    <property type="protein sequence ID" value="Mp5g06470.2.cds"/>
    <property type="gene ID" value="Mp5g06470"/>
</dbReference>
<dbReference type="OrthoDB" id="343842at2759"/>
<dbReference type="Proteomes" id="UP000244005">
    <property type="component" value="Unassembled WGS sequence"/>
</dbReference>
<dbReference type="GO" id="GO:0009570">
    <property type="term" value="C:chloroplast stroma"/>
    <property type="evidence" value="ECO:0007669"/>
    <property type="project" value="UniProtKB-SubCell"/>
</dbReference>
<dbReference type="GO" id="GO:0009959">
    <property type="term" value="P:negative gravitropism"/>
    <property type="evidence" value="ECO:0000315"/>
    <property type="project" value="UniProtKB"/>
</dbReference>
<dbReference type="GO" id="GO:2000904">
    <property type="term" value="P:regulation of starch metabolic process"/>
    <property type="evidence" value="ECO:0000315"/>
    <property type="project" value="UniProtKB"/>
</dbReference>
<dbReference type="GO" id="GO:0062052">
    <property type="term" value="P:starch granule initiation"/>
    <property type="evidence" value="ECO:0000315"/>
    <property type="project" value="UniProtKB"/>
</dbReference>
<dbReference type="GO" id="GO:0005982">
    <property type="term" value="P:starch metabolic process"/>
    <property type="evidence" value="ECO:0000318"/>
    <property type="project" value="GO_Central"/>
</dbReference>
<dbReference type="InterPro" id="IPR052495">
    <property type="entry name" value="Alpha-glucan_binding_chloro"/>
</dbReference>
<dbReference type="PANTHER" id="PTHR34113">
    <property type="entry name" value="INACTIVE PURPLE ACID PHOSPHATASE-LIKE PROTEIN"/>
    <property type="match status" value="1"/>
</dbReference>
<dbReference type="PANTHER" id="PTHR34113:SF3">
    <property type="entry name" value="PROTEIN EARLY STARVATION 1, CHLOROPLASTIC"/>
    <property type="match status" value="1"/>
</dbReference>
<organism>
    <name type="scientific">Marchantia polymorpha</name>
    <name type="common">Common liverwort</name>
    <name type="synonym">Marchantia aquatica</name>
    <dbReference type="NCBI Taxonomy" id="3197"/>
    <lineage>
        <taxon>Eukaryota</taxon>
        <taxon>Viridiplantae</taxon>
        <taxon>Streptophyta</taxon>
        <taxon>Embryophyta</taxon>
        <taxon>Marchantiophyta</taxon>
        <taxon>Marchantiopsida</taxon>
        <taxon>Marchantiidae</taxon>
        <taxon>Marchantiales</taxon>
        <taxon>Marchantiaceae</taxon>
        <taxon>Marchantia</taxon>
    </lineage>
</organism>
<gene>
    <name evidence="5" type="primary">ESV1</name>
    <name evidence="7 8" type="ORF">MARPO_0189s0007</name>
</gene>
<sequence>MALDVLGRLGFFNCGSGSVVTPCSASARLSSELEPSKQRNRSWFRSPGSGGSTWAVANILCFDKDTIPESFRNGRLRSRARQKTLLEGASRSSLSSAARLWISKTAGIPSSRTGCRGSVLNGGWSGGEVAGEGRKSLLPIKRHSSCSSQSLPQQQRRTKDAGRVVCYSHRKRNLGSLLGSRVVEEPWSWILEGYVLKGLTGRRNDGPSELELGRGSYRGGPVHGANHIRPLQRPDSVHPQPLTSARPRRGTEHDELPLRRTLRNCIPHSRDTPPKRDTGIASEKDWGINLKNEKTSESGVNEDGSTWYRESGEDLGDNGYRCRWTVMGGKNADGTSEWKEAWWEKSDWTGYKELGAEKSGKNAQGDTWWETWQEILRQDDWSNLARIEKSAQKQAKSGSGTAGWYEKWWEKYNAKGWSEKGAHKYGRLNDQGWWEKWGEQYDGRGAVLKWTDKWAETDMGTKWGDKWEERFNVGIGTRQGETWHYSATGERWSRTWGEEHFGNGKVHKYGKSTSGESWDSVVEEGTFYQAEPHYGWADAVGNSGQLLSIVALERPPGIYPDLDLGMNKEQQ</sequence>
<evidence type="ECO:0000250" key="1">
    <source>
        <dbReference type="UniProtKB" id="F4I9G2"/>
    </source>
</evidence>
<evidence type="ECO:0000255" key="2"/>
<evidence type="ECO:0000256" key="3">
    <source>
        <dbReference type="SAM" id="MobiDB-lite"/>
    </source>
</evidence>
<evidence type="ECO:0000269" key="4">
    <source>
    </source>
</evidence>
<evidence type="ECO:0000303" key="5">
    <source>
    </source>
</evidence>
<evidence type="ECO:0000305" key="6"/>
<evidence type="ECO:0000312" key="7">
    <source>
        <dbReference type="EMBL" id="PTQ27632.1"/>
    </source>
</evidence>
<evidence type="ECO:0000312" key="8">
    <source>
        <dbReference type="EMBL" id="PTQ27633.1"/>
    </source>
</evidence>
<comment type="function">
    <text evidence="1 4">Binds preferentially to highly ordered alpha-glucans, such as starch and crystalline maltodextrins (By similarity). Involved in the organization of the starch granule matrix, thus influencing starch turnover by modulating the accessibility of starch polymers to modifying and degrading enzymes (PubMed:34367195). Required for the control of starch degradation in leaves and starch distribution in nonphotosynthetic parts (PubMed:34367195). Promotes gravitropic responses, negative in shoots but positive in roots, by facilitating starch granules (statoliths) formation in hypocotyls and roots columella (PubMed:34367195).</text>
</comment>
<comment type="subcellular location">
    <subcellularLocation>
        <location evidence="1">Plastid</location>
        <location evidence="1">Chloroplast stroma</location>
    </subcellularLocation>
    <text evidence="1">Binds to starch granules in chloroplasts.</text>
</comment>
<comment type="similarity">
    <text evidence="6">Belongs to the ESV1 family.</text>
</comment>
<comment type="sequence caution" evidence="6">
    <conflict type="erroneous gene model prediction">
        <sequence resource="EMBL-CDS" id="PTQ27633"/>
    </conflict>
</comment>
<name>ESV1_MARPO</name>
<feature type="transit peptide" description="Chloroplast" evidence="2">
    <location>
        <begin position="1"/>
        <end status="unknown"/>
    </location>
</feature>
<feature type="chain" id="PRO_0000457403" description="Protein EARLY STARVATION 1, chloroplastic">
    <location>
        <begin status="unknown"/>
        <end position="571"/>
    </location>
</feature>
<feature type="region of interest" description="Disordered" evidence="3">
    <location>
        <begin position="142"/>
        <end position="162"/>
    </location>
</feature>
<feature type="region of interest" description="Disordered" evidence="3">
    <location>
        <begin position="215"/>
        <end position="254"/>
    </location>
</feature>
<feature type="compositionally biased region" description="Low complexity" evidence="3">
    <location>
        <begin position="145"/>
        <end position="155"/>
    </location>
</feature>
<reference key="1">
    <citation type="journal article" date="2017" name="Cell">
        <title>Insights into land plant evolution garnered from the Marchantia polymorpha genome.</title>
        <authorList>
            <person name="Bowman J.L."/>
            <person name="Kohchi T."/>
            <person name="Yamato K.T."/>
            <person name="Jenkins J."/>
            <person name="Shu S."/>
            <person name="Ishizaki K."/>
            <person name="Yamaoka S."/>
            <person name="Nishihama R."/>
            <person name="Nakamura Y."/>
            <person name="Berger F."/>
            <person name="Adam C."/>
            <person name="Aki S.S."/>
            <person name="Althoff F."/>
            <person name="Araki T."/>
            <person name="Arteaga-Vazquez M.A."/>
            <person name="Balasubrmanian S."/>
            <person name="Barry K."/>
            <person name="Bauer D."/>
            <person name="Boehm C.R."/>
            <person name="Briginshaw L."/>
            <person name="Caballero-Perez J."/>
            <person name="Catarino B."/>
            <person name="Chen F."/>
            <person name="Chiyoda S."/>
            <person name="Chovatia M."/>
            <person name="Davies K.M."/>
            <person name="Delmans M."/>
            <person name="Demura T."/>
            <person name="Dierschke T."/>
            <person name="Dolan L."/>
            <person name="Dorantes-Acosta A.E."/>
            <person name="Eklund D.M."/>
            <person name="Florent S.N."/>
            <person name="Flores-Sandoval E."/>
            <person name="Fujiyama A."/>
            <person name="Fukuzawa H."/>
            <person name="Galik B."/>
            <person name="Grimanelli D."/>
            <person name="Grimwood J."/>
            <person name="Grossniklaus U."/>
            <person name="Hamada T."/>
            <person name="Haseloff J."/>
            <person name="Hetherington A.J."/>
            <person name="Higo A."/>
            <person name="Hirakawa Y."/>
            <person name="Hundley H.N."/>
            <person name="Ikeda Y."/>
            <person name="Inoue K."/>
            <person name="Inoue S.I."/>
            <person name="Ishida S."/>
            <person name="Jia Q."/>
            <person name="Kakita M."/>
            <person name="Kanazawa T."/>
            <person name="Kawai Y."/>
            <person name="Kawashima T."/>
            <person name="Kennedy M."/>
            <person name="Kinose K."/>
            <person name="Kinoshita T."/>
            <person name="Kohara Y."/>
            <person name="Koide E."/>
            <person name="Komatsu K."/>
            <person name="Kopischke S."/>
            <person name="Kubo M."/>
            <person name="Kyozuka J."/>
            <person name="Lagercrantz U."/>
            <person name="Lin S.S."/>
            <person name="Lindquist E."/>
            <person name="Lipzen A.M."/>
            <person name="Lu C.W."/>
            <person name="De Luna E."/>
            <person name="Martienssen R.A."/>
            <person name="Minamino N."/>
            <person name="Mizutani M."/>
            <person name="Mizutani M."/>
            <person name="Mochizuki N."/>
            <person name="Monte I."/>
            <person name="Mosher R."/>
            <person name="Nagasaki H."/>
            <person name="Nakagami H."/>
            <person name="Naramoto S."/>
            <person name="Nishitani K."/>
            <person name="Ohtani M."/>
            <person name="Okamoto T."/>
            <person name="Okumura M."/>
            <person name="Phillips J."/>
            <person name="Pollak B."/>
            <person name="Reinders A."/>
            <person name="Rovekamp M."/>
            <person name="Sano R."/>
            <person name="Sawa S."/>
            <person name="Schmid M.W."/>
            <person name="Shirakawa M."/>
            <person name="Solano R."/>
            <person name="Spunde A."/>
            <person name="Suetsugu N."/>
            <person name="Sugano S."/>
            <person name="Sugiyama A."/>
            <person name="Sun R."/>
            <person name="Suzuki Y."/>
            <person name="Takenaka M."/>
            <person name="Takezawa D."/>
            <person name="Tomogane H."/>
            <person name="Tsuzuki M."/>
            <person name="Ueda T."/>
            <person name="Umeda M."/>
            <person name="Ward J.M."/>
            <person name="Watanabe Y."/>
            <person name="Yazaki K."/>
            <person name="Yokoyama R."/>
            <person name="Yoshitake Y."/>
            <person name="Yotsui I."/>
            <person name="Zachgo S."/>
            <person name="Schmutz J."/>
        </authorList>
    </citation>
    <scope>NUCLEOTIDE SEQUENCE [LARGE SCALE GENOMIC DNA]</scope>
    <source>
        <strain>Tak-1</strain>
    </source>
</reference>
<reference key="2">
    <citation type="journal article" date="2021" name="Front. Plant Sci.">
        <title>EARLY STARVATION 1 is a functionally conserved protein promoting gravitropic responses in plants by forming starch granules.</title>
        <authorList>
            <person name="Song K."/>
            <person name="Lee D.-W."/>
            <person name="Kim J."/>
            <person name="Kim J."/>
            <person name="Guim H."/>
            <person name="Kim K."/>
            <person name="Jeon J.-S."/>
            <person name="Choi G."/>
        </authorList>
    </citation>
    <scope>FUNCTION</scope>
</reference>
<protein>
    <recommendedName>
        <fullName evidence="5">Protein EARLY STARVATION 1, chloroplastic</fullName>
        <shortName evidence="5">MpESV1</shortName>
    </recommendedName>
</protein>
<keyword id="KW-0150">Chloroplast</keyword>
<keyword id="KW-0934">Plastid</keyword>
<keyword id="KW-1185">Reference proteome</keyword>
<keyword id="KW-0809">Transit peptide</keyword>
<proteinExistence type="inferred from homology"/>